<proteinExistence type="inferred from homology"/>
<evidence type="ECO:0000250" key="1"/>
<evidence type="ECO:0000250" key="2">
    <source>
        <dbReference type="UniProtKB" id="Q14061"/>
    </source>
</evidence>
<evidence type="ECO:0000255" key="3">
    <source>
        <dbReference type="PROSITE-ProRule" id="PRU01150"/>
    </source>
</evidence>
<evidence type="ECO:0000305" key="4"/>
<feature type="chain" id="PRO_0000422759" description="Cytochrome c oxidase copper chaperone 2">
    <location>
        <begin position="1"/>
        <end position="72"/>
    </location>
</feature>
<feature type="domain" description="CHCH" evidence="3">
    <location>
        <begin position="32"/>
        <end position="72"/>
    </location>
</feature>
<feature type="short sequence motif" description="Cx9C motif 1" evidence="3">
    <location>
        <begin position="35"/>
        <end position="45"/>
    </location>
</feature>
<feature type="short sequence motif" description="Cx9C motif 2" evidence="3">
    <location>
        <begin position="54"/>
        <end position="64"/>
    </location>
</feature>
<feature type="binding site" evidence="2">
    <location>
        <position position="32"/>
    </location>
    <ligand>
        <name>Cu cation</name>
        <dbReference type="ChEBI" id="CHEBI:23378"/>
    </ligand>
</feature>
<feature type="binding site" evidence="2">
    <location>
        <position position="33"/>
    </location>
    <ligand>
        <name>Cu cation</name>
        <dbReference type="ChEBI" id="CHEBI:23378"/>
    </ligand>
</feature>
<feature type="disulfide bond" evidence="3">
    <location>
        <begin position="35"/>
        <end position="64"/>
    </location>
</feature>
<feature type="disulfide bond" evidence="3">
    <location>
        <begin position="45"/>
        <end position="54"/>
    </location>
</feature>
<feature type="sequence conflict" description="In Ref. 5; AAM61247." evidence="4" ref="5">
    <original>E</original>
    <variation>A</variation>
    <location>
        <position position="24"/>
    </location>
</feature>
<feature type="sequence conflict" description="In Ref. 4; ABD38858 and 5; AAM61247." evidence="4" ref="4 5">
    <original>G</original>
    <variation>S</variation>
    <location>
        <position position="69"/>
    </location>
</feature>
<sequence>MSGLQAQDSACSLDKPSKDVVATETKPKKRICCACPDTKKLRDECIVEHGESACTKWIEAHILCLRSEGFKV</sequence>
<reference key="1">
    <citation type="submission" date="2001-02" db="EMBL/GenBank/DDBJ databases">
        <title>COX17-2, an A. thaliana copper chaperone.</title>
        <authorList>
            <person name="Wintz H."/>
        </authorList>
    </citation>
    <scope>NUCLEOTIDE SEQUENCE [MRNA]</scope>
</reference>
<reference key="2">
    <citation type="journal article" date="2000" name="Nature">
        <title>Sequence and analysis of chromosome 1 of the plant Arabidopsis thaliana.</title>
        <authorList>
            <person name="Theologis A."/>
            <person name="Ecker J.R."/>
            <person name="Palm C.J."/>
            <person name="Federspiel N.A."/>
            <person name="Kaul S."/>
            <person name="White O."/>
            <person name="Alonso J."/>
            <person name="Altafi H."/>
            <person name="Araujo R."/>
            <person name="Bowman C.L."/>
            <person name="Brooks S.Y."/>
            <person name="Buehler E."/>
            <person name="Chan A."/>
            <person name="Chao Q."/>
            <person name="Chen H."/>
            <person name="Cheuk R.F."/>
            <person name="Chin C.W."/>
            <person name="Chung M.K."/>
            <person name="Conn L."/>
            <person name="Conway A.B."/>
            <person name="Conway A.R."/>
            <person name="Creasy T.H."/>
            <person name="Dewar K."/>
            <person name="Dunn P."/>
            <person name="Etgu P."/>
            <person name="Feldblyum T.V."/>
            <person name="Feng J.-D."/>
            <person name="Fong B."/>
            <person name="Fujii C.Y."/>
            <person name="Gill J.E."/>
            <person name="Goldsmith A.D."/>
            <person name="Haas B."/>
            <person name="Hansen N.F."/>
            <person name="Hughes B."/>
            <person name="Huizar L."/>
            <person name="Hunter J.L."/>
            <person name="Jenkins J."/>
            <person name="Johnson-Hopson C."/>
            <person name="Khan S."/>
            <person name="Khaykin E."/>
            <person name="Kim C.J."/>
            <person name="Koo H.L."/>
            <person name="Kremenetskaia I."/>
            <person name="Kurtz D.B."/>
            <person name="Kwan A."/>
            <person name="Lam B."/>
            <person name="Langin-Hooper S."/>
            <person name="Lee A."/>
            <person name="Lee J.M."/>
            <person name="Lenz C.A."/>
            <person name="Li J.H."/>
            <person name="Li Y.-P."/>
            <person name="Lin X."/>
            <person name="Liu S.X."/>
            <person name="Liu Z.A."/>
            <person name="Luros J.S."/>
            <person name="Maiti R."/>
            <person name="Marziali A."/>
            <person name="Militscher J."/>
            <person name="Miranda M."/>
            <person name="Nguyen M."/>
            <person name="Nierman W.C."/>
            <person name="Osborne B.I."/>
            <person name="Pai G."/>
            <person name="Peterson J."/>
            <person name="Pham P.K."/>
            <person name="Rizzo M."/>
            <person name="Rooney T."/>
            <person name="Rowley D."/>
            <person name="Sakano H."/>
            <person name="Salzberg S.L."/>
            <person name="Schwartz J.R."/>
            <person name="Shinn P."/>
            <person name="Southwick A.M."/>
            <person name="Sun H."/>
            <person name="Tallon L.J."/>
            <person name="Tambunga G."/>
            <person name="Toriumi M.J."/>
            <person name="Town C.D."/>
            <person name="Utterback T."/>
            <person name="Van Aken S."/>
            <person name="Vaysberg M."/>
            <person name="Vysotskaia V.S."/>
            <person name="Walker M."/>
            <person name="Wu D."/>
            <person name="Yu G."/>
            <person name="Fraser C.M."/>
            <person name="Venter J.C."/>
            <person name="Davis R.W."/>
        </authorList>
    </citation>
    <scope>NUCLEOTIDE SEQUENCE [LARGE SCALE GENOMIC DNA]</scope>
    <source>
        <strain>cv. Columbia</strain>
    </source>
</reference>
<reference key="3">
    <citation type="journal article" date="2017" name="Plant J.">
        <title>Araport11: a complete reannotation of the Arabidopsis thaliana reference genome.</title>
        <authorList>
            <person name="Cheng C.Y."/>
            <person name="Krishnakumar V."/>
            <person name="Chan A.P."/>
            <person name="Thibaud-Nissen F."/>
            <person name="Schobel S."/>
            <person name="Town C.D."/>
        </authorList>
    </citation>
    <scope>GENOME REANNOTATION</scope>
    <source>
        <strain>cv. Columbia</strain>
    </source>
</reference>
<reference key="4">
    <citation type="submission" date="2006-02" db="EMBL/GenBank/DDBJ databases">
        <title>Arabidopsis ORF clones.</title>
        <authorList>
            <person name="Shinn P."/>
            <person name="Chen H."/>
            <person name="Kim C.J."/>
            <person name="Ecker J.R."/>
        </authorList>
    </citation>
    <scope>NUCLEOTIDE SEQUENCE [LARGE SCALE MRNA]</scope>
    <source>
        <strain>cv. Columbia</strain>
    </source>
</reference>
<reference key="5">
    <citation type="submission" date="2002-03" db="EMBL/GenBank/DDBJ databases">
        <title>Full-length cDNA from Arabidopsis thaliana.</title>
        <authorList>
            <person name="Brover V.V."/>
            <person name="Troukhan M.E."/>
            <person name="Alexandrov N.A."/>
            <person name="Lu Y.-P."/>
            <person name="Flavell R.B."/>
            <person name="Feldmann K.A."/>
        </authorList>
    </citation>
    <scope>NUCLEOTIDE SEQUENCE [LARGE SCALE MRNA]</scope>
</reference>
<protein>
    <recommendedName>
        <fullName>Cytochrome c oxidase copper chaperone 2</fullName>
    </recommendedName>
</protein>
<organism>
    <name type="scientific">Arabidopsis thaliana</name>
    <name type="common">Mouse-ear cress</name>
    <dbReference type="NCBI Taxonomy" id="3702"/>
    <lineage>
        <taxon>Eukaryota</taxon>
        <taxon>Viridiplantae</taxon>
        <taxon>Streptophyta</taxon>
        <taxon>Embryophyta</taxon>
        <taxon>Tracheophyta</taxon>
        <taxon>Spermatophyta</taxon>
        <taxon>Magnoliopsida</taxon>
        <taxon>eudicotyledons</taxon>
        <taxon>Gunneridae</taxon>
        <taxon>Pentapetalae</taxon>
        <taxon>rosids</taxon>
        <taxon>malvids</taxon>
        <taxon>Brassicales</taxon>
        <taxon>Brassicaceae</taxon>
        <taxon>Camelineae</taxon>
        <taxon>Arabidopsis</taxon>
    </lineage>
</organism>
<accession>Q94FT1</accession>
<accession>Q2HIR2</accession>
<accession>Q8LFR7</accession>
<dbReference type="EMBL" id="AF349685">
    <property type="protein sequence ID" value="AAK73497.1"/>
    <property type="molecule type" value="mRNA"/>
</dbReference>
<dbReference type="EMBL" id="AC022520">
    <property type="status" value="NOT_ANNOTATED_CDS"/>
    <property type="molecule type" value="Genomic_DNA"/>
</dbReference>
<dbReference type="EMBL" id="CP002684">
    <property type="protein sequence ID" value="AEE32879.1"/>
    <property type="molecule type" value="Genomic_DNA"/>
</dbReference>
<dbReference type="EMBL" id="BT024519">
    <property type="protein sequence ID" value="ABD38858.1"/>
    <property type="molecule type" value="mRNA"/>
</dbReference>
<dbReference type="EMBL" id="AY084685">
    <property type="protein sequence ID" value="AAM61247.1"/>
    <property type="molecule type" value="mRNA"/>
</dbReference>
<dbReference type="RefSeq" id="NP_175711.1">
    <property type="nucleotide sequence ID" value="NM_104181.5"/>
</dbReference>
<dbReference type="SMR" id="Q94FT1"/>
<dbReference type="BioGRID" id="26961">
    <property type="interactions" value="1"/>
</dbReference>
<dbReference type="FunCoup" id="Q94FT1">
    <property type="interactions" value="1939"/>
</dbReference>
<dbReference type="STRING" id="3702.Q94FT1"/>
<dbReference type="PaxDb" id="3702-AT1G53030.1"/>
<dbReference type="ProteomicsDB" id="220510"/>
<dbReference type="EnsemblPlants" id="AT1G53030.1">
    <property type="protein sequence ID" value="AT1G53030.1"/>
    <property type="gene ID" value="AT1G53030"/>
</dbReference>
<dbReference type="GeneID" id="841736"/>
<dbReference type="Gramene" id="AT1G53030.1">
    <property type="protein sequence ID" value="AT1G53030.1"/>
    <property type="gene ID" value="AT1G53030"/>
</dbReference>
<dbReference type="KEGG" id="ath:AT1G53030"/>
<dbReference type="Araport" id="AT1G53030"/>
<dbReference type="TAIR" id="AT1G53030"/>
<dbReference type="eggNOG" id="KOG3496">
    <property type="taxonomic scope" value="Eukaryota"/>
</dbReference>
<dbReference type="HOGENOM" id="CLU_149618_1_1_1"/>
<dbReference type="InParanoid" id="Q94FT1"/>
<dbReference type="OMA" id="HKACMRK"/>
<dbReference type="PhylomeDB" id="Q94FT1"/>
<dbReference type="PRO" id="PR:Q94FT1"/>
<dbReference type="Proteomes" id="UP000006548">
    <property type="component" value="Chromosome 1"/>
</dbReference>
<dbReference type="ExpressionAtlas" id="Q94FT1">
    <property type="expression patterns" value="baseline and differential"/>
</dbReference>
<dbReference type="GO" id="GO:0005829">
    <property type="term" value="C:cytosol"/>
    <property type="evidence" value="ECO:0007005"/>
    <property type="project" value="TAIR"/>
</dbReference>
<dbReference type="GO" id="GO:0005758">
    <property type="term" value="C:mitochondrial intermembrane space"/>
    <property type="evidence" value="ECO:0007669"/>
    <property type="project" value="UniProtKB-SubCell"/>
</dbReference>
<dbReference type="GO" id="GO:0016531">
    <property type="term" value="F:copper chaperone activity"/>
    <property type="evidence" value="ECO:0007669"/>
    <property type="project" value="InterPro"/>
</dbReference>
<dbReference type="GO" id="GO:0005507">
    <property type="term" value="F:copper ion binding"/>
    <property type="evidence" value="ECO:0007669"/>
    <property type="project" value="InterPro"/>
</dbReference>
<dbReference type="FunFam" id="1.10.287.1130:FF:000003">
    <property type="entry name" value="Cytochrome c oxidase copper chaperone"/>
    <property type="match status" value="1"/>
</dbReference>
<dbReference type="Gene3D" id="1.10.287.1130">
    <property type="entry name" value="CytochromE C oxidase copper chaperone"/>
    <property type="match status" value="1"/>
</dbReference>
<dbReference type="InterPro" id="IPR009069">
    <property type="entry name" value="Cys_alpha_HP_mot_SF"/>
</dbReference>
<dbReference type="InterPro" id="IPR007745">
    <property type="entry name" value="Cyt_c_oxidase_Cu-chaperone"/>
</dbReference>
<dbReference type="PANTHER" id="PTHR16719">
    <property type="entry name" value="CYTOCHROME C OXIDASE COPPER CHAPERONE"/>
    <property type="match status" value="1"/>
</dbReference>
<dbReference type="PANTHER" id="PTHR16719:SF0">
    <property type="entry name" value="CYTOCHROME C OXIDASE COPPER CHAPERONE"/>
    <property type="match status" value="1"/>
</dbReference>
<dbReference type="Pfam" id="PF05051">
    <property type="entry name" value="COX17"/>
    <property type="match status" value="1"/>
</dbReference>
<dbReference type="SUPFAM" id="SSF47072">
    <property type="entry name" value="Cysteine alpha-hairpin motif"/>
    <property type="match status" value="1"/>
</dbReference>
<dbReference type="PROSITE" id="PS51808">
    <property type="entry name" value="CHCH"/>
    <property type="match status" value="1"/>
</dbReference>
<keyword id="KW-0143">Chaperone</keyword>
<keyword id="KW-0186">Copper</keyword>
<keyword id="KW-1015">Disulfide bond</keyword>
<keyword id="KW-0479">Metal-binding</keyword>
<keyword id="KW-0496">Mitochondrion</keyword>
<keyword id="KW-1185">Reference proteome</keyword>
<gene>
    <name type="primary">COX17-2</name>
    <name type="ordered locus">At1g53030</name>
    <name type="ORF">F8L10</name>
</gene>
<comment type="function">
    <text evidence="1">Copper chaperone for cytochrome c oxidase (COX). Binds 2 copper ions and delivers them to the Cu(A) site of COX (By similarity).</text>
</comment>
<comment type="subcellular location">
    <subcellularLocation>
        <location>Mitochondrion intermembrane space</location>
    </subcellularLocation>
</comment>
<comment type="similarity">
    <text evidence="4">Belongs to the COX17 family.</text>
</comment>
<name>CX172_ARATH</name>